<accession>A1SWS4</accession>
<dbReference type="EC" id="2.8.1.-" evidence="1"/>
<dbReference type="EMBL" id="CP000510">
    <property type="protein sequence ID" value="ABM03939.1"/>
    <property type="molecule type" value="Genomic_DNA"/>
</dbReference>
<dbReference type="RefSeq" id="WP_011770499.1">
    <property type="nucleotide sequence ID" value="NC_008709.1"/>
</dbReference>
<dbReference type="SMR" id="A1SWS4"/>
<dbReference type="STRING" id="357804.Ping_2198"/>
<dbReference type="KEGG" id="pin:Ping_2198"/>
<dbReference type="eggNOG" id="COG0037">
    <property type="taxonomic scope" value="Bacteria"/>
</dbReference>
<dbReference type="HOGENOM" id="CLU_026481_0_0_6"/>
<dbReference type="OrthoDB" id="9801054at2"/>
<dbReference type="Proteomes" id="UP000000639">
    <property type="component" value="Chromosome"/>
</dbReference>
<dbReference type="GO" id="GO:0005737">
    <property type="term" value="C:cytoplasm"/>
    <property type="evidence" value="ECO:0007669"/>
    <property type="project" value="UniProtKB-SubCell"/>
</dbReference>
<dbReference type="GO" id="GO:0051539">
    <property type="term" value="F:4 iron, 4 sulfur cluster binding"/>
    <property type="evidence" value="ECO:0007669"/>
    <property type="project" value="UniProtKB-UniRule"/>
</dbReference>
<dbReference type="GO" id="GO:0005524">
    <property type="term" value="F:ATP binding"/>
    <property type="evidence" value="ECO:0007669"/>
    <property type="project" value="UniProtKB-UniRule"/>
</dbReference>
<dbReference type="GO" id="GO:0000287">
    <property type="term" value="F:magnesium ion binding"/>
    <property type="evidence" value="ECO:0007669"/>
    <property type="project" value="UniProtKB-UniRule"/>
</dbReference>
<dbReference type="GO" id="GO:0016783">
    <property type="term" value="F:sulfurtransferase activity"/>
    <property type="evidence" value="ECO:0007669"/>
    <property type="project" value="UniProtKB-UniRule"/>
</dbReference>
<dbReference type="GO" id="GO:0000049">
    <property type="term" value="F:tRNA binding"/>
    <property type="evidence" value="ECO:0007669"/>
    <property type="project" value="UniProtKB-KW"/>
</dbReference>
<dbReference type="GO" id="GO:0034227">
    <property type="term" value="P:tRNA thio-modification"/>
    <property type="evidence" value="ECO:0007669"/>
    <property type="project" value="UniProtKB-UniRule"/>
</dbReference>
<dbReference type="CDD" id="cd24138">
    <property type="entry name" value="TtcA-like"/>
    <property type="match status" value="1"/>
</dbReference>
<dbReference type="Gene3D" id="3.40.50.620">
    <property type="entry name" value="HUPs"/>
    <property type="match status" value="1"/>
</dbReference>
<dbReference type="HAMAP" id="MF_01850">
    <property type="entry name" value="TtcA"/>
    <property type="match status" value="1"/>
</dbReference>
<dbReference type="InterPro" id="IPR014729">
    <property type="entry name" value="Rossmann-like_a/b/a_fold"/>
</dbReference>
<dbReference type="InterPro" id="IPR011063">
    <property type="entry name" value="TilS/TtcA_N"/>
</dbReference>
<dbReference type="InterPro" id="IPR012089">
    <property type="entry name" value="tRNA_Cyd_32_2_STrfase"/>
</dbReference>
<dbReference type="InterPro" id="IPR035107">
    <property type="entry name" value="tRNA_thiolation_TtcA_Ctu1"/>
</dbReference>
<dbReference type="NCBIfam" id="NF007972">
    <property type="entry name" value="PRK10696.1"/>
    <property type="match status" value="1"/>
</dbReference>
<dbReference type="PANTHER" id="PTHR43686:SF1">
    <property type="entry name" value="AMINOTRAN_5 DOMAIN-CONTAINING PROTEIN"/>
    <property type="match status" value="1"/>
</dbReference>
<dbReference type="PANTHER" id="PTHR43686">
    <property type="entry name" value="SULFURTRANSFERASE-RELATED"/>
    <property type="match status" value="1"/>
</dbReference>
<dbReference type="Pfam" id="PF01171">
    <property type="entry name" value="ATP_bind_3"/>
    <property type="match status" value="1"/>
</dbReference>
<dbReference type="PIRSF" id="PIRSF004976">
    <property type="entry name" value="ATPase_YdaO"/>
    <property type="match status" value="1"/>
</dbReference>
<dbReference type="SUPFAM" id="SSF52402">
    <property type="entry name" value="Adenine nucleotide alpha hydrolases-like"/>
    <property type="match status" value="1"/>
</dbReference>
<organism>
    <name type="scientific">Psychromonas ingrahamii (strain DSM 17664 / CCUG 51855 / 37)</name>
    <dbReference type="NCBI Taxonomy" id="357804"/>
    <lineage>
        <taxon>Bacteria</taxon>
        <taxon>Pseudomonadati</taxon>
        <taxon>Pseudomonadota</taxon>
        <taxon>Gammaproteobacteria</taxon>
        <taxon>Alteromonadales</taxon>
        <taxon>Psychromonadaceae</taxon>
        <taxon>Psychromonas</taxon>
    </lineage>
</organism>
<evidence type="ECO:0000255" key="1">
    <source>
        <dbReference type="HAMAP-Rule" id="MF_01850"/>
    </source>
</evidence>
<sequence>MSDVLSKKQQFSLKKLNKSLRKSTGQAIADYNMIEEGDRVMVCLSGGKDSFTMLDILLELRAAAPIHFEIIAVNLDQKQPDFPEHILPEYLQKLGVDYKIVEEDTYSIVQDKIPEGKTTCSLCSRLRRGILYRTAKELGATKIALGHHRDDLLATLMLNMFFGGKLKSMPAKLVSDNGEHVVIRPLAYCKEKEIEAYAKLKEYPIIPCNLCGSQPNLQRQVTKNMLNEWDVKFPGRLETMFTAMQNVVPSHLSDTALFNFKEIDKSSGVIDGGDLAFDKEPIKHHTEDITPIETQYYQQHQAVKIKQLT</sequence>
<comment type="function">
    <text evidence="1">Catalyzes the ATP-dependent 2-thiolation of cytidine in position 32 of tRNA, to form 2-thiocytidine (s(2)C32). The sulfur atoms are provided by the cysteine/cysteine desulfurase (IscS) system.</text>
</comment>
<comment type="catalytic activity">
    <reaction evidence="1">
        <text>cytidine(32) in tRNA + S-sulfanyl-L-cysteinyl-[cysteine desulfurase] + AH2 + ATP = 2-thiocytidine(32) in tRNA + L-cysteinyl-[cysteine desulfurase] + A + AMP + diphosphate + H(+)</text>
        <dbReference type="Rhea" id="RHEA:57048"/>
        <dbReference type="Rhea" id="RHEA-COMP:10288"/>
        <dbReference type="Rhea" id="RHEA-COMP:12157"/>
        <dbReference type="Rhea" id="RHEA-COMP:12158"/>
        <dbReference type="Rhea" id="RHEA-COMP:14821"/>
        <dbReference type="ChEBI" id="CHEBI:13193"/>
        <dbReference type="ChEBI" id="CHEBI:15378"/>
        <dbReference type="ChEBI" id="CHEBI:17499"/>
        <dbReference type="ChEBI" id="CHEBI:29950"/>
        <dbReference type="ChEBI" id="CHEBI:30616"/>
        <dbReference type="ChEBI" id="CHEBI:33019"/>
        <dbReference type="ChEBI" id="CHEBI:61963"/>
        <dbReference type="ChEBI" id="CHEBI:82748"/>
        <dbReference type="ChEBI" id="CHEBI:141453"/>
        <dbReference type="ChEBI" id="CHEBI:456215"/>
    </reaction>
    <physiologicalReaction direction="left-to-right" evidence="1">
        <dbReference type="Rhea" id="RHEA:57049"/>
    </physiologicalReaction>
</comment>
<comment type="cofactor">
    <cofactor evidence="1">
        <name>Mg(2+)</name>
        <dbReference type="ChEBI" id="CHEBI:18420"/>
    </cofactor>
</comment>
<comment type="cofactor">
    <cofactor evidence="1">
        <name>[4Fe-4S] cluster</name>
        <dbReference type="ChEBI" id="CHEBI:49883"/>
    </cofactor>
    <text evidence="1">Binds 1 [4Fe-4S] cluster per subunit. The cluster is chelated by three Cys residues, the fourth Fe has a free coordination site that may bind a sulfur atom transferred from the persulfide of IscS.</text>
</comment>
<comment type="pathway">
    <text evidence="1">tRNA modification.</text>
</comment>
<comment type="subunit">
    <text evidence="1">Homodimer.</text>
</comment>
<comment type="subcellular location">
    <subcellularLocation>
        <location evidence="1">Cytoplasm</location>
    </subcellularLocation>
</comment>
<comment type="miscellaneous">
    <text evidence="1">The thiolation reaction likely consists of two steps: a first activation step by ATP to form an adenylated intermediate of the target base of tRNA, and a second nucleophilic substitution step of the sulfur (S) atom supplied by the hydrosulfide attached to the Fe-S cluster.</text>
</comment>
<comment type="similarity">
    <text evidence="1">Belongs to the TtcA family.</text>
</comment>
<feature type="chain" id="PRO_0000348809" description="tRNA-cytidine(32) 2-sulfurtransferase">
    <location>
        <begin position="1"/>
        <end position="309"/>
    </location>
</feature>
<feature type="short sequence motif" description="PP-loop motif" evidence="1">
    <location>
        <begin position="45"/>
        <end position="50"/>
    </location>
</feature>
<feature type="binding site" evidence="1">
    <location>
        <position position="120"/>
    </location>
    <ligand>
        <name>[4Fe-4S] cluster</name>
        <dbReference type="ChEBI" id="CHEBI:49883"/>
    </ligand>
</feature>
<feature type="binding site" evidence="1">
    <location>
        <position position="123"/>
    </location>
    <ligand>
        <name>[4Fe-4S] cluster</name>
        <dbReference type="ChEBI" id="CHEBI:49883"/>
    </ligand>
</feature>
<feature type="binding site" evidence="1">
    <location>
        <position position="211"/>
    </location>
    <ligand>
        <name>[4Fe-4S] cluster</name>
        <dbReference type="ChEBI" id="CHEBI:49883"/>
    </ligand>
</feature>
<protein>
    <recommendedName>
        <fullName evidence="1">tRNA-cytidine(32) 2-sulfurtransferase</fullName>
        <ecNumber evidence="1">2.8.1.-</ecNumber>
    </recommendedName>
    <alternativeName>
        <fullName evidence="1">Two-thiocytidine biosynthesis protein A</fullName>
    </alternativeName>
    <alternativeName>
        <fullName evidence="1">tRNA 2-thiocytidine biosynthesis protein TtcA</fullName>
    </alternativeName>
</protein>
<name>TTCA_PSYIN</name>
<keyword id="KW-0004">4Fe-4S</keyword>
<keyword id="KW-0067">ATP-binding</keyword>
<keyword id="KW-0963">Cytoplasm</keyword>
<keyword id="KW-0408">Iron</keyword>
<keyword id="KW-0411">Iron-sulfur</keyword>
<keyword id="KW-0460">Magnesium</keyword>
<keyword id="KW-0479">Metal-binding</keyword>
<keyword id="KW-0547">Nucleotide-binding</keyword>
<keyword id="KW-1185">Reference proteome</keyword>
<keyword id="KW-0694">RNA-binding</keyword>
<keyword id="KW-0808">Transferase</keyword>
<keyword id="KW-0819">tRNA processing</keyword>
<keyword id="KW-0820">tRNA-binding</keyword>
<gene>
    <name evidence="1" type="primary">ttcA</name>
    <name type="ordered locus">Ping_2198</name>
</gene>
<proteinExistence type="inferred from homology"/>
<reference key="1">
    <citation type="journal article" date="2008" name="BMC Genomics">
        <title>Genomics of an extreme psychrophile, Psychromonas ingrahamii.</title>
        <authorList>
            <person name="Riley M."/>
            <person name="Staley J.T."/>
            <person name="Danchin A."/>
            <person name="Wang T.Z."/>
            <person name="Brettin T.S."/>
            <person name="Hauser L.J."/>
            <person name="Land M.L."/>
            <person name="Thompson L.S."/>
        </authorList>
    </citation>
    <scope>NUCLEOTIDE SEQUENCE [LARGE SCALE GENOMIC DNA]</scope>
    <source>
        <strain>DSM 17664 / CCUG 51855 / 37</strain>
    </source>
</reference>